<feature type="chain" id="PRO_0000179340" description="Trigger factor">
    <location>
        <begin position="1"/>
        <end position="448"/>
    </location>
</feature>
<feature type="domain" description="PPIase FKBP-type" evidence="1">
    <location>
        <begin position="162"/>
        <end position="243"/>
    </location>
</feature>
<feature type="region of interest" description="Disordered" evidence="2">
    <location>
        <begin position="426"/>
        <end position="448"/>
    </location>
</feature>
<feature type="compositionally biased region" description="Acidic residues" evidence="2">
    <location>
        <begin position="437"/>
        <end position="448"/>
    </location>
</feature>
<protein>
    <recommendedName>
        <fullName evidence="1">Trigger factor</fullName>
        <shortName evidence="1">TF</shortName>
        <ecNumber evidence="1">5.2.1.8</ecNumber>
    </recommendedName>
    <alternativeName>
        <fullName evidence="1">PPIase</fullName>
    </alternativeName>
</protein>
<evidence type="ECO:0000255" key="1">
    <source>
        <dbReference type="HAMAP-Rule" id="MF_00303"/>
    </source>
</evidence>
<evidence type="ECO:0000256" key="2">
    <source>
        <dbReference type="SAM" id="MobiDB-lite"/>
    </source>
</evidence>
<gene>
    <name evidence="1" type="primary">tig</name>
    <name type="ordered locus">DIP1793</name>
</gene>
<dbReference type="EC" id="5.2.1.8" evidence="1"/>
<dbReference type="EMBL" id="BX248359">
    <property type="protein sequence ID" value="CAE50323.1"/>
    <property type="molecule type" value="Genomic_DNA"/>
</dbReference>
<dbReference type="RefSeq" id="WP_010935339.1">
    <property type="nucleotide sequence ID" value="NC_002935.2"/>
</dbReference>
<dbReference type="SMR" id="Q6NFU3"/>
<dbReference type="STRING" id="257309.DIP1793"/>
<dbReference type="KEGG" id="cdi:DIP1793"/>
<dbReference type="HOGENOM" id="CLU_033058_3_0_11"/>
<dbReference type="Proteomes" id="UP000002198">
    <property type="component" value="Chromosome"/>
</dbReference>
<dbReference type="GO" id="GO:0005737">
    <property type="term" value="C:cytoplasm"/>
    <property type="evidence" value="ECO:0007669"/>
    <property type="project" value="UniProtKB-SubCell"/>
</dbReference>
<dbReference type="GO" id="GO:0003755">
    <property type="term" value="F:peptidyl-prolyl cis-trans isomerase activity"/>
    <property type="evidence" value="ECO:0007669"/>
    <property type="project" value="UniProtKB-UniRule"/>
</dbReference>
<dbReference type="GO" id="GO:0044183">
    <property type="term" value="F:protein folding chaperone"/>
    <property type="evidence" value="ECO:0007669"/>
    <property type="project" value="TreeGrafter"/>
</dbReference>
<dbReference type="GO" id="GO:0043022">
    <property type="term" value="F:ribosome binding"/>
    <property type="evidence" value="ECO:0007669"/>
    <property type="project" value="TreeGrafter"/>
</dbReference>
<dbReference type="GO" id="GO:0051083">
    <property type="term" value="P:'de novo' cotranslational protein folding"/>
    <property type="evidence" value="ECO:0007669"/>
    <property type="project" value="TreeGrafter"/>
</dbReference>
<dbReference type="GO" id="GO:0051301">
    <property type="term" value="P:cell division"/>
    <property type="evidence" value="ECO:0007669"/>
    <property type="project" value="UniProtKB-KW"/>
</dbReference>
<dbReference type="GO" id="GO:0061077">
    <property type="term" value="P:chaperone-mediated protein folding"/>
    <property type="evidence" value="ECO:0007669"/>
    <property type="project" value="TreeGrafter"/>
</dbReference>
<dbReference type="GO" id="GO:0015031">
    <property type="term" value="P:protein transport"/>
    <property type="evidence" value="ECO:0007669"/>
    <property type="project" value="UniProtKB-UniRule"/>
</dbReference>
<dbReference type="GO" id="GO:0043335">
    <property type="term" value="P:protein unfolding"/>
    <property type="evidence" value="ECO:0007669"/>
    <property type="project" value="TreeGrafter"/>
</dbReference>
<dbReference type="Gene3D" id="3.10.50.40">
    <property type="match status" value="1"/>
</dbReference>
<dbReference type="Gene3D" id="3.30.70.1050">
    <property type="entry name" value="Trigger factor ribosome-binding domain"/>
    <property type="match status" value="1"/>
</dbReference>
<dbReference type="Gene3D" id="1.10.3120.10">
    <property type="entry name" value="Trigger factor, C-terminal domain"/>
    <property type="match status" value="1"/>
</dbReference>
<dbReference type="HAMAP" id="MF_00303">
    <property type="entry name" value="Trigger_factor_Tig"/>
    <property type="match status" value="1"/>
</dbReference>
<dbReference type="InterPro" id="IPR046357">
    <property type="entry name" value="PPIase_dom_sf"/>
</dbReference>
<dbReference type="InterPro" id="IPR001179">
    <property type="entry name" value="PPIase_FKBP_dom"/>
</dbReference>
<dbReference type="InterPro" id="IPR005215">
    <property type="entry name" value="Trig_fac"/>
</dbReference>
<dbReference type="InterPro" id="IPR008880">
    <property type="entry name" value="Trigger_fac_C"/>
</dbReference>
<dbReference type="InterPro" id="IPR037041">
    <property type="entry name" value="Trigger_fac_C_sf"/>
</dbReference>
<dbReference type="InterPro" id="IPR008881">
    <property type="entry name" value="Trigger_fac_ribosome-bd_bac"/>
</dbReference>
<dbReference type="InterPro" id="IPR036611">
    <property type="entry name" value="Trigger_fac_ribosome-bd_sf"/>
</dbReference>
<dbReference type="InterPro" id="IPR027304">
    <property type="entry name" value="Trigger_fact/SurA_dom_sf"/>
</dbReference>
<dbReference type="NCBIfam" id="TIGR00115">
    <property type="entry name" value="tig"/>
    <property type="match status" value="1"/>
</dbReference>
<dbReference type="PANTHER" id="PTHR30560">
    <property type="entry name" value="TRIGGER FACTOR CHAPERONE AND PEPTIDYL-PROLYL CIS/TRANS ISOMERASE"/>
    <property type="match status" value="1"/>
</dbReference>
<dbReference type="PANTHER" id="PTHR30560:SF3">
    <property type="entry name" value="TRIGGER FACTOR-LIKE PROTEIN TIG, CHLOROPLASTIC"/>
    <property type="match status" value="1"/>
</dbReference>
<dbReference type="Pfam" id="PF00254">
    <property type="entry name" value="FKBP_C"/>
    <property type="match status" value="1"/>
</dbReference>
<dbReference type="Pfam" id="PF05698">
    <property type="entry name" value="Trigger_C"/>
    <property type="match status" value="1"/>
</dbReference>
<dbReference type="Pfam" id="PF05697">
    <property type="entry name" value="Trigger_N"/>
    <property type="match status" value="1"/>
</dbReference>
<dbReference type="PIRSF" id="PIRSF003095">
    <property type="entry name" value="Trigger_factor"/>
    <property type="match status" value="1"/>
</dbReference>
<dbReference type="SUPFAM" id="SSF54534">
    <property type="entry name" value="FKBP-like"/>
    <property type="match status" value="1"/>
</dbReference>
<dbReference type="SUPFAM" id="SSF109998">
    <property type="entry name" value="Triger factor/SurA peptide-binding domain-like"/>
    <property type="match status" value="1"/>
</dbReference>
<dbReference type="SUPFAM" id="SSF102735">
    <property type="entry name" value="Trigger factor ribosome-binding domain"/>
    <property type="match status" value="1"/>
</dbReference>
<dbReference type="PROSITE" id="PS50059">
    <property type="entry name" value="FKBP_PPIASE"/>
    <property type="match status" value="1"/>
</dbReference>
<organism>
    <name type="scientific">Corynebacterium diphtheriae (strain ATCC 700971 / NCTC 13129 / Biotype gravis)</name>
    <dbReference type="NCBI Taxonomy" id="257309"/>
    <lineage>
        <taxon>Bacteria</taxon>
        <taxon>Bacillati</taxon>
        <taxon>Actinomycetota</taxon>
        <taxon>Actinomycetes</taxon>
        <taxon>Mycobacteriales</taxon>
        <taxon>Corynebacteriaceae</taxon>
        <taxon>Corynebacterium</taxon>
    </lineage>
</organism>
<comment type="function">
    <text evidence="1">Involved in protein export. Acts as a chaperone by maintaining the newly synthesized protein in an open conformation. Functions as a peptidyl-prolyl cis-trans isomerase.</text>
</comment>
<comment type="catalytic activity">
    <reaction evidence="1">
        <text>[protein]-peptidylproline (omega=180) = [protein]-peptidylproline (omega=0)</text>
        <dbReference type="Rhea" id="RHEA:16237"/>
        <dbReference type="Rhea" id="RHEA-COMP:10747"/>
        <dbReference type="Rhea" id="RHEA-COMP:10748"/>
        <dbReference type="ChEBI" id="CHEBI:83833"/>
        <dbReference type="ChEBI" id="CHEBI:83834"/>
        <dbReference type="EC" id="5.2.1.8"/>
    </reaction>
</comment>
<comment type="subcellular location">
    <subcellularLocation>
        <location>Cytoplasm</location>
    </subcellularLocation>
    <text evidence="1">About half TF is bound to the ribosome near the polypeptide exit tunnel while the other half is free in the cytoplasm.</text>
</comment>
<comment type="domain">
    <text evidence="1">Consists of 3 domains; the N-terminus binds the ribosome, the middle domain has PPIase activity, while the C-terminus has intrinsic chaperone activity on its own.</text>
</comment>
<comment type="similarity">
    <text evidence="1">Belongs to the FKBP-type PPIase family. Tig subfamily.</text>
</comment>
<sequence>MKSSVEKLSETRVKLNVEVPFEELKPEIDQAYKALAQQITIPGFRRGKAPRQLIDARIGRGAVLEQVINDMLPTRYQQVVEENELVVLGQPHIDITKLEDNEVVEFTAEVDVRPEITVPDFSAFAVEVPALKSNDEAIDAQIDKLRERFGELKDTKRKLKTDDFAIIDIEAAIDGEKLEEATTEGMSYQVGAGDLIDGLDTALRGLKAGESAEFTTTLKAGEHEGKEAAVTVTVQQTKERKLPELDEEFVQTASEFDTVEELRESIAEQVAEQAKAEQATAIRDEVLKAALAEATFELPEGVVEDQIHAQLHQLLNQVGGDEAALNAALEAQGTSREQFDADNRKNSEEAVRTQLFLDALAEQEQPEVSQQELTDHILFTAQSYGMDPNQFITQLQQSGQIGNLFSDVRRGKALAAAICRVSVKDDEGKAVDPSEYFGEEEESAEESE</sequence>
<reference key="1">
    <citation type="journal article" date="2003" name="Nucleic Acids Res.">
        <title>The complete genome sequence and analysis of Corynebacterium diphtheriae NCTC13129.</title>
        <authorList>
            <person name="Cerdeno-Tarraga A.-M."/>
            <person name="Efstratiou A."/>
            <person name="Dover L.G."/>
            <person name="Holden M.T.G."/>
            <person name="Pallen M.J."/>
            <person name="Bentley S.D."/>
            <person name="Besra G.S."/>
            <person name="Churcher C.M."/>
            <person name="James K.D."/>
            <person name="De Zoysa A."/>
            <person name="Chillingworth T."/>
            <person name="Cronin A."/>
            <person name="Dowd L."/>
            <person name="Feltwell T."/>
            <person name="Hamlin N."/>
            <person name="Holroyd S."/>
            <person name="Jagels K."/>
            <person name="Moule S."/>
            <person name="Quail M.A."/>
            <person name="Rabbinowitsch E."/>
            <person name="Rutherford K.M."/>
            <person name="Thomson N.R."/>
            <person name="Unwin L."/>
            <person name="Whitehead S."/>
            <person name="Barrell B.G."/>
            <person name="Parkhill J."/>
        </authorList>
    </citation>
    <scope>NUCLEOTIDE SEQUENCE [LARGE SCALE GENOMIC DNA]</scope>
    <source>
        <strain>ATCC 700971 / NCTC 13129 / Biotype gravis</strain>
    </source>
</reference>
<proteinExistence type="inferred from homology"/>
<accession>Q6NFU3</accession>
<name>TIG_CORDI</name>
<keyword id="KW-0131">Cell cycle</keyword>
<keyword id="KW-0132">Cell division</keyword>
<keyword id="KW-0143">Chaperone</keyword>
<keyword id="KW-0963">Cytoplasm</keyword>
<keyword id="KW-0413">Isomerase</keyword>
<keyword id="KW-1185">Reference proteome</keyword>
<keyword id="KW-0697">Rotamase</keyword>